<sequence>MKAADVRALSADQLKEELAKLKKEQFNLRFQKATGQLEKSSRINEVRKDIARIKTIARQKAAEAKA</sequence>
<feature type="chain" id="PRO_0000130442" description="Large ribosomal subunit protein uL29">
    <location>
        <begin position="1"/>
        <end position="66"/>
    </location>
</feature>
<name>RL29_RHIME</name>
<comment type="similarity">
    <text evidence="1">Belongs to the universal ribosomal protein uL29 family.</text>
</comment>
<dbReference type="EMBL" id="AL591688">
    <property type="protein sequence ID" value="CAC45943.1"/>
    <property type="molecule type" value="Genomic_DNA"/>
</dbReference>
<dbReference type="RefSeq" id="NP_385470.1">
    <property type="nucleotide sequence ID" value="NC_003047.1"/>
</dbReference>
<dbReference type="RefSeq" id="WP_003536529.1">
    <property type="nucleotide sequence ID" value="NC_003047.1"/>
</dbReference>
<dbReference type="SMR" id="Q92QG2"/>
<dbReference type="EnsemblBacteria" id="CAC45943">
    <property type="protein sequence ID" value="CAC45943"/>
    <property type="gene ID" value="SMc01301"/>
</dbReference>
<dbReference type="GeneID" id="89575688"/>
<dbReference type="KEGG" id="sme:SMc01301"/>
<dbReference type="PATRIC" id="fig|266834.11.peg.2780"/>
<dbReference type="eggNOG" id="COG0255">
    <property type="taxonomic scope" value="Bacteria"/>
</dbReference>
<dbReference type="HOGENOM" id="CLU_158491_1_0_5"/>
<dbReference type="OrthoDB" id="9815192at2"/>
<dbReference type="Proteomes" id="UP000001976">
    <property type="component" value="Chromosome"/>
</dbReference>
<dbReference type="GO" id="GO:0022625">
    <property type="term" value="C:cytosolic large ribosomal subunit"/>
    <property type="evidence" value="ECO:0007669"/>
    <property type="project" value="TreeGrafter"/>
</dbReference>
<dbReference type="GO" id="GO:0003735">
    <property type="term" value="F:structural constituent of ribosome"/>
    <property type="evidence" value="ECO:0007669"/>
    <property type="project" value="InterPro"/>
</dbReference>
<dbReference type="GO" id="GO:0006412">
    <property type="term" value="P:translation"/>
    <property type="evidence" value="ECO:0007669"/>
    <property type="project" value="UniProtKB-UniRule"/>
</dbReference>
<dbReference type="CDD" id="cd00427">
    <property type="entry name" value="Ribosomal_L29_HIP"/>
    <property type="match status" value="1"/>
</dbReference>
<dbReference type="FunFam" id="1.10.287.310:FF:000001">
    <property type="entry name" value="50S ribosomal protein L29"/>
    <property type="match status" value="1"/>
</dbReference>
<dbReference type="Gene3D" id="1.10.287.310">
    <property type="match status" value="1"/>
</dbReference>
<dbReference type="HAMAP" id="MF_00374">
    <property type="entry name" value="Ribosomal_uL29"/>
    <property type="match status" value="1"/>
</dbReference>
<dbReference type="InterPro" id="IPR050063">
    <property type="entry name" value="Ribosomal_protein_uL29"/>
</dbReference>
<dbReference type="InterPro" id="IPR001854">
    <property type="entry name" value="Ribosomal_uL29"/>
</dbReference>
<dbReference type="InterPro" id="IPR018254">
    <property type="entry name" value="Ribosomal_uL29_CS"/>
</dbReference>
<dbReference type="InterPro" id="IPR036049">
    <property type="entry name" value="Ribosomal_uL29_sf"/>
</dbReference>
<dbReference type="NCBIfam" id="TIGR00012">
    <property type="entry name" value="L29"/>
    <property type="match status" value="1"/>
</dbReference>
<dbReference type="PANTHER" id="PTHR10916">
    <property type="entry name" value="60S RIBOSOMAL PROTEIN L35/50S RIBOSOMAL PROTEIN L29"/>
    <property type="match status" value="1"/>
</dbReference>
<dbReference type="PANTHER" id="PTHR10916:SF0">
    <property type="entry name" value="LARGE RIBOSOMAL SUBUNIT PROTEIN UL29C"/>
    <property type="match status" value="1"/>
</dbReference>
<dbReference type="Pfam" id="PF00831">
    <property type="entry name" value="Ribosomal_L29"/>
    <property type="match status" value="1"/>
</dbReference>
<dbReference type="SUPFAM" id="SSF46561">
    <property type="entry name" value="Ribosomal protein L29 (L29p)"/>
    <property type="match status" value="1"/>
</dbReference>
<dbReference type="PROSITE" id="PS00579">
    <property type="entry name" value="RIBOSOMAL_L29"/>
    <property type="match status" value="1"/>
</dbReference>
<protein>
    <recommendedName>
        <fullName evidence="1">Large ribosomal subunit protein uL29</fullName>
    </recommendedName>
    <alternativeName>
        <fullName evidence="2">50S ribosomal protein L29</fullName>
    </alternativeName>
</protein>
<gene>
    <name evidence="1" type="primary">rpmC</name>
    <name type="ordered locus">R01364</name>
    <name type="ORF">SMc01301</name>
</gene>
<keyword id="KW-1185">Reference proteome</keyword>
<keyword id="KW-0687">Ribonucleoprotein</keyword>
<keyword id="KW-0689">Ribosomal protein</keyword>
<proteinExistence type="inferred from homology"/>
<evidence type="ECO:0000255" key="1">
    <source>
        <dbReference type="HAMAP-Rule" id="MF_00374"/>
    </source>
</evidence>
<evidence type="ECO:0000305" key="2"/>
<reference key="1">
    <citation type="journal article" date="2001" name="Proc. Natl. Acad. Sci. U.S.A.">
        <title>Analysis of the chromosome sequence of the legume symbiont Sinorhizobium meliloti strain 1021.</title>
        <authorList>
            <person name="Capela D."/>
            <person name="Barloy-Hubler F."/>
            <person name="Gouzy J."/>
            <person name="Bothe G."/>
            <person name="Ampe F."/>
            <person name="Batut J."/>
            <person name="Boistard P."/>
            <person name="Becker A."/>
            <person name="Boutry M."/>
            <person name="Cadieu E."/>
            <person name="Dreano S."/>
            <person name="Gloux S."/>
            <person name="Godrie T."/>
            <person name="Goffeau A."/>
            <person name="Kahn D."/>
            <person name="Kiss E."/>
            <person name="Lelaure V."/>
            <person name="Masuy D."/>
            <person name="Pohl T."/>
            <person name="Portetelle D."/>
            <person name="Puehler A."/>
            <person name="Purnelle B."/>
            <person name="Ramsperger U."/>
            <person name="Renard C."/>
            <person name="Thebault P."/>
            <person name="Vandenbol M."/>
            <person name="Weidner S."/>
            <person name="Galibert F."/>
        </authorList>
    </citation>
    <scope>NUCLEOTIDE SEQUENCE [LARGE SCALE GENOMIC DNA]</scope>
    <source>
        <strain>1021</strain>
    </source>
</reference>
<reference key="2">
    <citation type="journal article" date="2001" name="Science">
        <title>The composite genome of the legume symbiont Sinorhizobium meliloti.</title>
        <authorList>
            <person name="Galibert F."/>
            <person name="Finan T.M."/>
            <person name="Long S.R."/>
            <person name="Puehler A."/>
            <person name="Abola P."/>
            <person name="Ampe F."/>
            <person name="Barloy-Hubler F."/>
            <person name="Barnett M.J."/>
            <person name="Becker A."/>
            <person name="Boistard P."/>
            <person name="Bothe G."/>
            <person name="Boutry M."/>
            <person name="Bowser L."/>
            <person name="Buhrmester J."/>
            <person name="Cadieu E."/>
            <person name="Capela D."/>
            <person name="Chain P."/>
            <person name="Cowie A."/>
            <person name="Davis R.W."/>
            <person name="Dreano S."/>
            <person name="Federspiel N.A."/>
            <person name="Fisher R.F."/>
            <person name="Gloux S."/>
            <person name="Godrie T."/>
            <person name="Goffeau A."/>
            <person name="Golding B."/>
            <person name="Gouzy J."/>
            <person name="Gurjal M."/>
            <person name="Hernandez-Lucas I."/>
            <person name="Hong A."/>
            <person name="Huizar L."/>
            <person name="Hyman R.W."/>
            <person name="Jones T."/>
            <person name="Kahn D."/>
            <person name="Kahn M.L."/>
            <person name="Kalman S."/>
            <person name="Keating D.H."/>
            <person name="Kiss E."/>
            <person name="Komp C."/>
            <person name="Lelaure V."/>
            <person name="Masuy D."/>
            <person name="Palm C."/>
            <person name="Peck M.C."/>
            <person name="Pohl T.M."/>
            <person name="Portetelle D."/>
            <person name="Purnelle B."/>
            <person name="Ramsperger U."/>
            <person name="Surzycki R."/>
            <person name="Thebault P."/>
            <person name="Vandenbol M."/>
            <person name="Vorhoelter F.J."/>
            <person name="Weidner S."/>
            <person name="Wells D.H."/>
            <person name="Wong K."/>
            <person name="Yeh K.-C."/>
            <person name="Batut J."/>
        </authorList>
    </citation>
    <scope>NUCLEOTIDE SEQUENCE [LARGE SCALE GENOMIC DNA]</scope>
    <source>
        <strain>1021</strain>
    </source>
</reference>
<organism>
    <name type="scientific">Rhizobium meliloti (strain 1021)</name>
    <name type="common">Ensifer meliloti</name>
    <name type="synonym">Sinorhizobium meliloti</name>
    <dbReference type="NCBI Taxonomy" id="266834"/>
    <lineage>
        <taxon>Bacteria</taxon>
        <taxon>Pseudomonadati</taxon>
        <taxon>Pseudomonadota</taxon>
        <taxon>Alphaproteobacteria</taxon>
        <taxon>Hyphomicrobiales</taxon>
        <taxon>Rhizobiaceae</taxon>
        <taxon>Sinorhizobium/Ensifer group</taxon>
        <taxon>Sinorhizobium</taxon>
    </lineage>
</organism>
<accession>Q92QG2</accession>